<dbReference type="EC" id="2.7.10.1" evidence="13"/>
<dbReference type="EC" id="2.7.11.1" evidence="1 2 5 6 7"/>
<dbReference type="EMBL" id="AB221045">
    <property type="protein sequence ID" value="BAE75921.1"/>
    <property type="molecule type" value="Genomic_DNA"/>
</dbReference>
<dbReference type="EMBL" id="AC003113">
    <property type="protein sequence ID" value="AAF70839.1"/>
    <property type="status" value="ALT_SEQ"/>
    <property type="molecule type" value="Genomic_DNA"/>
</dbReference>
<dbReference type="EMBL" id="CP002684">
    <property type="protein sequence ID" value="AEE33962.2"/>
    <property type="molecule type" value="Genomic_DNA"/>
</dbReference>
<dbReference type="PIR" id="T01451">
    <property type="entry name" value="T01451"/>
</dbReference>
<dbReference type="RefSeq" id="NP_176430.2">
    <property type="nucleotide sequence ID" value="NM_104920.3"/>
</dbReference>
<dbReference type="SMR" id="Q2MHE4"/>
<dbReference type="FunCoup" id="Q2MHE4">
    <property type="interactions" value="238"/>
</dbReference>
<dbReference type="IntAct" id="Q2MHE4">
    <property type="interactions" value="2"/>
</dbReference>
<dbReference type="STRING" id="3702.Q2MHE4"/>
<dbReference type="PaxDb" id="3702-AT1G62400.1"/>
<dbReference type="ProteomicsDB" id="230272"/>
<dbReference type="EnsemblPlants" id="AT1G62400.1">
    <property type="protein sequence ID" value="AT1G62400.1"/>
    <property type="gene ID" value="AT1G62400"/>
</dbReference>
<dbReference type="GeneID" id="842538"/>
<dbReference type="Gramene" id="AT1G62400.1">
    <property type="protein sequence ID" value="AT1G62400.1"/>
    <property type="gene ID" value="AT1G62400"/>
</dbReference>
<dbReference type="KEGG" id="ath:AT1G62400"/>
<dbReference type="Araport" id="AT1G62400"/>
<dbReference type="TAIR" id="AT1G62400">
    <property type="gene designation" value="HT1"/>
</dbReference>
<dbReference type="eggNOG" id="KOG0192">
    <property type="taxonomic scope" value="Eukaryota"/>
</dbReference>
<dbReference type="HOGENOM" id="CLU_000288_7_35_1"/>
<dbReference type="InParanoid" id="Q2MHE4"/>
<dbReference type="OMA" id="RDYKHEN"/>
<dbReference type="OrthoDB" id="4062651at2759"/>
<dbReference type="PhylomeDB" id="Q2MHE4"/>
<dbReference type="PRO" id="PR:Q2MHE4"/>
<dbReference type="Proteomes" id="UP000006548">
    <property type="component" value="Chromosome 1"/>
</dbReference>
<dbReference type="ExpressionAtlas" id="Q2MHE4">
    <property type="expression patterns" value="baseline and differential"/>
</dbReference>
<dbReference type="GO" id="GO:0005886">
    <property type="term" value="C:plasma membrane"/>
    <property type="evidence" value="ECO:0000314"/>
    <property type="project" value="UniProtKB"/>
</dbReference>
<dbReference type="GO" id="GO:0005524">
    <property type="term" value="F:ATP binding"/>
    <property type="evidence" value="ECO:0007669"/>
    <property type="project" value="UniProtKB-KW"/>
</dbReference>
<dbReference type="GO" id="GO:0004672">
    <property type="term" value="F:protein kinase activity"/>
    <property type="evidence" value="ECO:0000314"/>
    <property type="project" value="UniProtKB"/>
</dbReference>
<dbReference type="GO" id="GO:0106310">
    <property type="term" value="F:protein serine kinase activity"/>
    <property type="evidence" value="ECO:0007669"/>
    <property type="project" value="RHEA"/>
</dbReference>
<dbReference type="GO" id="GO:0004674">
    <property type="term" value="F:protein serine/threonine kinase activity"/>
    <property type="evidence" value="ECO:0000314"/>
    <property type="project" value="UniProtKB"/>
</dbReference>
<dbReference type="GO" id="GO:0004714">
    <property type="term" value="F:transmembrane receptor protein tyrosine kinase activity"/>
    <property type="evidence" value="ECO:0007669"/>
    <property type="project" value="UniProtKB-EC"/>
</dbReference>
<dbReference type="GO" id="GO:0071244">
    <property type="term" value="P:cellular response to carbon dioxide"/>
    <property type="evidence" value="ECO:0000314"/>
    <property type="project" value="UniProtKB"/>
</dbReference>
<dbReference type="GO" id="GO:0046777">
    <property type="term" value="P:protein autophosphorylation"/>
    <property type="evidence" value="ECO:0000314"/>
    <property type="project" value="UniProtKB"/>
</dbReference>
<dbReference type="GO" id="GO:2000030">
    <property type="term" value="P:regulation of response to red or far red light"/>
    <property type="evidence" value="ECO:0000314"/>
    <property type="project" value="UniProtKB"/>
</dbReference>
<dbReference type="GO" id="GO:0090333">
    <property type="term" value="P:regulation of stomatal closure"/>
    <property type="evidence" value="ECO:0000315"/>
    <property type="project" value="UniProtKB"/>
</dbReference>
<dbReference type="GO" id="GO:0010119">
    <property type="term" value="P:regulation of stomatal movement"/>
    <property type="evidence" value="ECO:0000314"/>
    <property type="project" value="UniProtKB"/>
</dbReference>
<dbReference type="CDD" id="cd13999">
    <property type="entry name" value="STKc_MAP3K-like"/>
    <property type="match status" value="1"/>
</dbReference>
<dbReference type="FunFam" id="1.10.510.10:FF:000316">
    <property type="entry name" value="serine/threonine-protein kinase HT1"/>
    <property type="match status" value="1"/>
</dbReference>
<dbReference type="FunFam" id="3.30.200.20:FF:000060">
    <property type="entry name" value="Serine/threonine-protein kinase isoform 1"/>
    <property type="match status" value="1"/>
</dbReference>
<dbReference type="Gene3D" id="3.30.200.20">
    <property type="entry name" value="Phosphorylase Kinase, domain 1"/>
    <property type="match status" value="1"/>
</dbReference>
<dbReference type="Gene3D" id="1.10.510.10">
    <property type="entry name" value="Transferase(Phosphotransferase) domain 1"/>
    <property type="match status" value="1"/>
</dbReference>
<dbReference type="InterPro" id="IPR011009">
    <property type="entry name" value="Kinase-like_dom_sf"/>
</dbReference>
<dbReference type="InterPro" id="IPR000719">
    <property type="entry name" value="Prot_kinase_dom"/>
</dbReference>
<dbReference type="InterPro" id="IPR001245">
    <property type="entry name" value="Ser-Thr/Tyr_kinase_cat_dom"/>
</dbReference>
<dbReference type="InterPro" id="IPR008271">
    <property type="entry name" value="Ser/Thr_kinase_AS"/>
</dbReference>
<dbReference type="InterPro" id="IPR051681">
    <property type="entry name" value="Ser/Thr_Kinases-Pseudokinases"/>
</dbReference>
<dbReference type="PANTHER" id="PTHR44329">
    <property type="entry name" value="SERINE/THREONINE-PROTEIN KINASE TNNI3K-RELATED"/>
    <property type="match status" value="1"/>
</dbReference>
<dbReference type="PANTHER" id="PTHR44329:SF277">
    <property type="entry name" value="SERINE_THREONINE-PROTEIN KINASE HT1-LIKE"/>
    <property type="match status" value="1"/>
</dbReference>
<dbReference type="Pfam" id="PF07714">
    <property type="entry name" value="PK_Tyr_Ser-Thr"/>
    <property type="match status" value="1"/>
</dbReference>
<dbReference type="PRINTS" id="PR00109">
    <property type="entry name" value="TYRKINASE"/>
</dbReference>
<dbReference type="SMART" id="SM00220">
    <property type="entry name" value="S_TKc"/>
    <property type="match status" value="1"/>
</dbReference>
<dbReference type="SUPFAM" id="SSF56112">
    <property type="entry name" value="Protein kinase-like (PK-like)"/>
    <property type="match status" value="1"/>
</dbReference>
<dbReference type="PROSITE" id="PS50011">
    <property type="entry name" value="PROTEIN_KINASE_DOM"/>
    <property type="match status" value="1"/>
</dbReference>
<dbReference type="PROSITE" id="PS00108">
    <property type="entry name" value="PROTEIN_KINASE_ST"/>
    <property type="match status" value="1"/>
</dbReference>
<reference key="1">
    <citation type="journal article" date="2006" name="Nat. Cell Biol.">
        <title>Arabidopsis HT1 kinase controls stomatal movements in response to CO(2).</title>
        <authorList>
            <person name="Hashimoto M."/>
            <person name="Negi J."/>
            <person name="Young J."/>
            <person name="Israelsson M."/>
            <person name="Schroeder J.I."/>
            <person name="Iba K."/>
        </authorList>
    </citation>
    <scope>NUCLEOTIDE SEQUENCE [GENOMIC DNA]</scope>
    <scope>FUNCTION</scope>
    <scope>CATALYTIC ACTIVITY</scope>
    <scope>TISSUE SPECIFICITY</scope>
    <scope>AUTOPHOSPHORYLATION</scope>
    <scope>MUTAGENESIS OF LYS-113; ARG-211 AND 136-VAL--GLN-149</scope>
</reference>
<reference key="2">
    <citation type="journal article" date="2000" name="Nature">
        <title>Sequence and analysis of chromosome 1 of the plant Arabidopsis thaliana.</title>
        <authorList>
            <person name="Theologis A."/>
            <person name="Ecker J.R."/>
            <person name="Palm C.J."/>
            <person name="Federspiel N.A."/>
            <person name="Kaul S."/>
            <person name="White O."/>
            <person name="Alonso J."/>
            <person name="Altafi H."/>
            <person name="Araujo R."/>
            <person name="Bowman C.L."/>
            <person name="Brooks S.Y."/>
            <person name="Buehler E."/>
            <person name="Chan A."/>
            <person name="Chao Q."/>
            <person name="Chen H."/>
            <person name="Cheuk R.F."/>
            <person name="Chin C.W."/>
            <person name="Chung M.K."/>
            <person name="Conn L."/>
            <person name="Conway A.B."/>
            <person name="Conway A.R."/>
            <person name="Creasy T.H."/>
            <person name="Dewar K."/>
            <person name="Dunn P."/>
            <person name="Etgu P."/>
            <person name="Feldblyum T.V."/>
            <person name="Feng J.-D."/>
            <person name="Fong B."/>
            <person name="Fujii C.Y."/>
            <person name="Gill J.E."/>
            <person name="Goldsmith A.D."/>
            <person name="Haas B."/>
            <person name="Hansen N.F."/>
            <person name="Hughes B."/>
            <person name="Huizar L."/>
            <person name="Hunter J.L."/>
            <person name="Jenkins J."/>
            <person name="Johnson-Hopson C."/>
            <person name="Khan S."/>
            <person name="Khaykin E."/>
            <person name="Kim C.J."/>
            <person name="Koo H.L."/>
            <person name="Kremenetskaia I."/>
            <person name="Kurtz D.B."/>
            <person name="Kwan A."/>
            <person name="Lam B."/>
            <person name="Langin-Hooper S."/>
            <person name="Lee A."/>
            <person name="Lee J.M."/>
            <person name="Lenz C.A."/>
            <person name="Li J.H."/>
            <person name="Li Y.-P."/>
            <person name="Lin X."/>
            <person name="Liu S.X."/>
            <person name="Liu Z.A."/>
            <person name="Luros J.S."/>
            <person name="Maiti R."/>
            <person name="Marziali A."/>
            <person name="Militscher J."/>
            <person name="Miranda M."/>
            <person name="Nguyen M."/>
            <person name="Nierman W.C."/>
            <person name="Osborne B.I."/>
            <person name="Pai G."/>
            <person name="Peterson J."/>
            <person name="Pham P.K."/>
            <person name="Rizzo M."/>
            <person name="Rooney T."/>
            <person name="Rowley D."/>
            <person name="Sakano H."/>
            <person name="Salzberg S.L."/>
            <person name="Schwartz J.R."/>
            <person name="Shinn P."/>
            <person name="Southwick A.M."/>
            <person name="Sun H."/>
            <person name="Tallon L.J."/>
            <person name="Tambunga G."/>
            <person name="Toriumi M.J."/>
            <person name="Town C.D."/>
            <person name="Utterback T."/>
            <person name="Van Aken S."/>
            <person name="Vaysberg M."/>
            <person name="Vysotskaia V.S."/>
            <person name="Walker M."/>
            <person name="Wu D."/>
            <person name="Yu G."/>
            <person name="Fraser C.M."/>
            <person name="Venter J.C."/>
            <person name="Davis R.W."/>
        </authorList>
    </citation>
    <scope>NUCLEOTIDE SEQUENCE [LARGE SCALE GENOMIC DNA]</scope>
    <source>
        <strain>cv. Columbia</strain>
    </source>
</reference>
<reference key="3">
    <citation type="journal article" date="2017" name="Plant J.">
        <title>Araport11: a complete reannotation of the Arabidopsis thaliana reference genome.</title>
        <authorList>
            <person name="Cheng C.Y."/>
            <person name="Krishnakumar V."/>
            <person name="Chan A.P."/>
            <person name="Thibaud-Nissen F."/>
            <person name="Schobel S."/>
            <person name="Town C.D."/>
        </authorList>
    </citation>
    <scope>GENOME REANNOTATION</scope>
    <source>
        <strain>cv. Columbia</strain>
    </source>
</reference>
<reference key="4">
    <citation type="journal article" date="2015" name="Nat. Commun.">
        <title>A molecular pathway for CO(2) response in Arabidopsis guard cells.</title>
        <authorList>
            <person name="Tian W."/>
            <person name="Hou C."/>
            <person name="Ren Z."/>
            <person name="Pan Y."/>
            <person name="Jia J."/>
            <person name="Zhang H."/>
            <person name="Bai F."/>
            <person name="Zhang P."/>
            <person name="Zhu H."/>
            <person name="He Y."/>
            <person name="Luo S."/>
            <person name="Li L."/>
            <person name="Luan S."/>
        </authorList>
    </citation>
    <scope>FUNCTION</scope>
    <scope>INTERACTION WITH DTX56</scope>
    <scope>SUBCELLULAR LOCATION</scope>
</reference>
<reference key="5">
    <citation type="journal article" date="2015" name="New Phytol.">
        <title>The HT1 protein kinase is essential for red light-induced stomatal opening and genetically interacts with OST1 in red light and CO2 -induced stomatal movement responses.</title>
        <authorList>
            <person name="Matrosova A."/>
            <person name="Bogireddi H."/>
            <person name="Mateo-Penas A."/>
            <person name="Hashimoto-Sugimoto M."/>
            <person name="Iba K."/>
            <person name="Schroeder J.I."/>
            <person name="Israelsson-Nordstroem M."/>
        </authorList>
    </citation>
    <scope>FUNCTION</scope>
</reference>
<reference key="6">
    <citation type="journal article" date="2016" name="Plant Cell">
        <title>A dominant mutation in the HT1 kinase uncovers roles of MAP kinases and GHR1 in CO2-induced stomatal closure.</title>
        <authorList>
            <person name="Horak H."/>
            <person name="Sierla M."/>
            <person name="Toldsepp K."/>
            <person name="Wang C."/>
            <person name="Wang Y.-S."/>
            <person name="Nuhkat M."/>
            <person name="Valk E."/>
            <person name="Pechter P."/>
            <person name="Merilo E."/>
            <person name="Salojaervi J."/>
            <person name="Overmyer K."/>
            <person name="Loog M."/>
            <person name="Brosche M."/>
            <person name="Schroeder J.I."/>
            <person name="Kangasjaervi J."/>
            <person name="Kollist H."/>
        </authorList>
    </citation>
    <scope>FUNCTION</scope>
    <scope>MUTAGENESIS OF ALA-109 AND 136-VAL--GLN-149</scope>
    <scope>ACTIVITY REGULATION</scope>
    <scope>INTERACTION WITH MPK4 AND MPK12</scope>
    <scope>AUTOPHOSPHORYLATION</scope>
    <scope>CATALYTIC ACTIVITY</scope>
    <source>
        <strain>cv. Columbia</strain>
    </source>
</reference>
<reference key="7">
    <citation type="journal article" date="2016" name="PLoS Biol.">
        <title>Natural variation in Arabidopsis Cvi-0 accession reveals an important role of MPK12 in guard cell CO2 signaling.</title>
        <authorList>
            <person name="Jakobson L."/>
            <person name="Vaahtera L."/>
            <person name="Toldsepp K."/>
            <person name="Nuhkat M."/>
            <person name="Wang C."/>
            <person name="Wang Y.S."/>
            <person name="Horak H."/>
            <person name="Valk E."/>
            <person name="Pechter P."/>
            <person name="Sindarovska Y."/>
            <person name="Tang J."/>
            <person name="Xiao C."/>
            <person name="Xu Y."/>
            <person name="Gerst Talas U."/>
            <person name="Garcia-Sosa A.T."/>
            <person name="Kangasjaervi S."/>
            <person name="Maran U."/>
            <person name="Remm M."/>
            <person name="Roelfsema M.R."/>
            <person name="Hu H."/>
            <person name="Kangasjaervi J."/>
            <person name="Loog M."/>
            <person name="Schroeder J.I."/>
            <person name="Kollist H."/>
            <person name="Brosche M."/>
        </authorList>
    </citation>
    <scope>FUNCTION</scope>
    <scope>MUTAGENESIS OF LYS-113</scope>
    <scope>INTERACTION WITH MPK12</scope>
    <scope>ACTIVITY REGULATION</scope>
    <scope>AUTOPHOSPHORYLATION</scope>
    <scope>CATALYTIC ACTIVITY</scope>
    <source>
        <strain>cv. Columbia</strain>
        <strain>cv. Cvi-0</strain>
    </source>
</reference>
<reference key="8">
    <citation type="journal article" date="2017" name="Nat. Commun.">
        <title>Blue light and CO2 signals converge to regulate light-induced stomatal opening.</title>
        <authorList>
            <person name="Hiyama A."/>
            <person name="Takemiya A."/>
            <person name="Munemasa S."/>
            <person name="Okuma E."/>
            <person name="Sugiyama N."/>
            <person name="Tada Y."/>
            <person name="Murata Y."/>
            <person name="Shimazaki K.-I."/>
        </authorList>
    </citation>
    <scope>FUNCTION</scope>
    <scope>DISRUPTION PHENOTYPE</scope>
    <scope>CATALYTIC ACTIVITY</scope>
</reference>
<reference key="9">
    <citation type="journal article" date="2018" name="Plant Cell">
        <title>The receptor-like pseudokinase GHR1 is required for stomatal closure.</title>
        <authorList>
            <person name="Sierla M."/>
            <person name="Horak H."/>
            <person name="Overmyer K."/>
            <person name="Waszczak C."/>
            <person name="Yarmolinsky D."/>
            <person name="Maierhofer T."/>
            <person name="Vainonen J.P."/>
            <person name="Denessiouk K."/>
            <person name="Salojaervi J."/>
            <person name="Laanemets K."/>
            <person name="Toldsepp K."/>
            <person name="Vahisalu T."/>
            <person name="Gauthier A."/>
            <person name="Puukko T."/>
            <person name="Paulin L."/>
            <person name="Auvinen P."/>
            <person name="Geiger D."/>
            <person name="Hedrich R."/>
            <person name="Kollist H."/>
            <person name="Kangasjaervi J."/>
        </authorList>
    </citation>
    <scope>FUNCTION</scope>
    <scope>CATALYTIC ACTIVITY</scope>
    <source>
        <strain>cv. Columbia</strain>
        <strain>cv. Columbia GL1</strain>
    </source>
</reference>
<protein>
    <recommendedName>
        <fullName evidence="11">Serine/threonine/tyrosine-protein kinase HT1</fullName>
        <ecNumber evidence="13">2.7.10.1</ecNumber>
        <ecNumber evidence="1 2 5 6 7">2.7.11.1</ecNumber>
    </recommendedName>
    <alternativeName>
        <fullName evidence="9">High leaf temperature protein 1</fullName>
    </alternativeName>
</protein>
<evidence type="ECO:0000255" key="1">
    <source>
        <dbReference type="PROSITE-ProRule" id="PRU00159"/>
    </source>
</evidence>
<evidence type="ECO:0000269" key="2">
    <source>
    </source>
</evidence>
<evidence type="ECO:0000269" key="3">
    <source>
    </source>
</evidence>
<evidence type="ECO:0000269" key="4">
    <source>
    </source>
</evidence>
<evidence type="ECO:0000269" key="5">
    <source>
    </source>
</evidence>
<evidence type="ECO:0000269" key="6">
    <source>
    </source>
</evidence>
<evidence type="ECO:0000269" key="7">
    <source>
    </source>
</evidence>
<evidence type="ECO:0000269" key="8">
    <source>
    </source>
</evidence>
<evidence type="ECO:0000303" key="9">
    <source>
    </source>
</evidence>
<evidence type="ECO:0000303" key="10">
    <source>
    </source>
</evidence>
<evidence type="ECO:0000305" key="11"/>
<evidence type="ECO:0000305" key="12">
    <source>
    </source>
</evidence>
<evidence type="ECO:0000305" key="13">
    <source>
    </source>
</evidence>
<evidence type="ECO:0000312" key="14">
    <source>
        <dbReference type="Araport" id="AT1G62400"/>
    </source>
</evidence>
<evidence type="ECO:0000312" key="15">
    <source>
        <dbReference type="EMBL" id="AAF70839.1"/>
    </source>
</evidence>
<name>HT1_ARATH</name>
<keyword id="KW-0067">ATP-binding</keyword>
<keyword id="KW-1003">Cell membrane</keyword>
<keyword id="KW-0418">Kinase</keyword>
<keyword id="KW-0472">Membrane</keyword>
<keyword id="KW-0547">Nucleotide-binding</keyword>
<keyword id="KW-0597">Phosphoprotein</keyword>
<keyword id="KW-1185">Reference proteome</keyword>
<keyword id="KW-0723">Serine/threonine-protein kinase</keyword>
<keyword id="KW-0808">Transferase</keyword>
<keyword id="KW-0829">Tyrosine-protein kinase</keyword>
<accession>Q2MHE4</accession>
<accession>F4HYS2</accession>
<accession>Q9MAV2</accession>
<sequence>MSGLCFNPFRLRWSLRSKLPLEPSLPNLPCNPSSSKTNRYAEAETMEKKRFDSMESWSMILESENVETWEASKGEREEWTADLSQLFIGNKFASGAHSRIYRGIYKQRAVAVKMVRIPTHKEETRAKLEQQFKSEVALLSRLFHPNIVQFIAACKKPPVYCIITEYMSQGNLRMYLNKKEPYSLSIETVLRLALDISRGMEYLHSQGVIHRDLKSNNLLLNDEMRVKVADFGTSCLETQCREAKGNMGTYRWMAPEMIKEKPYTRKVDVYSFGIVLWELTTALLPFQGMTPVQAAFAVAEKNERPPLPASCQPALAHLIKRCWSENPSKRPDFSNIVAVLEKYDECVKEGLPLTSHASLTKTKKAILDHLKGCVTSISSPFSSSSVPVNA</sequence>
<gene>
    <name evidence="9" type="primary">HT1</name>
    <name evidence="10" type="synonym">SUU</name>
    <name evidence="14" type="ordered locus">At1g62400</name>
    <name evidence="15" type="ORF">F24O1.13</name>
</gene>
<feature type="chain" id="PRO_0000235238" description="Serine/threonine/tyrosine-protein kinase HT1">
    <location>
        <begin position="1"/>
        <end position="390"/>
    </location>
</feature>
<feature type="domain" description="Protein kinase" evidence="1">
    <location>
        <begin position="86"/>
        <end position="359"/>
    </location>
</feature>
<feature type="active site" description="Proton acceptor" evidence="1">
    <location>
        <position position="212"/>
    </location>
</feature>
<feature type="binding site" evidence="1">
    <location>
        <begin position="92"/>
        <end position="100"/>
    </location>
    <ligand>
        <name>ATP</name>
        <dbReference type="ChEBI" id="CHEBI:30616"/>
    </ligand>
</feature>
<feature type="binding site" evidence="1">
    <location>
        <position position="113"/>
    </location>
    <ligand>
        <name>ATP</name>
        <dbReference type="ChEBI" id="CHEBI:30616"/>
    </ligand>
</feature>
<feature type="mutagenesis site" description="In suu/ht1-8D; dominant mutation leading to constitutively open stomata and subsequent high stomatal conductance, and impaired stomatal CO(2) responses. Reduced binding and inhibition by MPK4 and MPK12." evidence="5">
    <original>A</original>
    <variation>V</variation>
    <location>
        <position position="109"/>
    </location>
</feature>
<feature type="mutagenesis site" description="Loss of kinase activity. Impaired MPK12-mediated phosphorylation." evidence="6">
    <original>K</original>
    <variation>M</variation>
    <location>
        <position position="113"/>
    </location>
</feature>
<feature type="mutagenesis site" description="Loss of kinase activity, induces a disrupted CO(2) response." evidence="2">
    <original>K</original>
    <variation>W</variation>
    <location>
        <position position="113"/>
    </location>
</feature>
<feature type="mutagenesis site" description="In ht1-2; loss of kinase activity. Impaired ability to control stomatal movements in response to CO(2) but normal responses to blue light, fusicoccin and abscisic acid (ABA). Tightly closed stomata." evidence="2 5">
    <location>
        <begin position="136"/>
        <end position="149"/>
    </location>
</feature>
<feature type="mutagenesis site" description="In ht1-1; impairs the ability to control stomatal movements in response to CO(2) probably due to loss of protein kinase activity." evidence="2">
    <original>R</original>
    <variation>K</variation>
    <location>
        <position position="211"/>
    </location>
</feature>
<proteinExistence type="evidence at protein level"/>
<organism>
    <name type="scientific">Arabidopsis thaliana</name>
    <name type="common">Mouse-ear cress</name>
    <dbReference type="NCBI Taxonomy" id="3702"/>
    <lineage>
        <taxon>Eukaryota</taxon>
        <taxon>Viridiplantae</taxon>
        <taxon>Streptophyta</taxon>
        <taxon>Embryophyta</taxon>
        <taxon>Tracheophyta</taxon>
        <taxon>Spermatophyta</taxon>
        <taxon>Magnoliopsida</taxon>
        <taxon>eudicotyledons</taxon>
        <taxon>Gunneridae</taxon>
        <taxon>Pentapetalae</taxon>
        <taxon>rosids</taxon>
        <taxon>malvids</taxon>
        <taxon>Brassicales</taxon>
        <taxon>Brassicaceae</taxon>
        <taxon>Camelineae</taxon>
        <taxon>Arabidopsis</taxon>
    </lineage>
</organism>
<comment type="function">
    <text evidence="2 3 4 5 6 7 8">Serine/threonine/tyrosine kinase involved in the control of stomatal movement in response to CO(2) (PubMed:16518390, PubMed:27694184, PubMed:27923039, PubMed:29101334, PubMed:30361234). Functions as a major negative regulator of CO(2)-induced stomatal closing (PubMed:16518390). Does not seem to be involved in stomatal closure in response to abscisic acid (ABA) or light (PubMed:16518390). Involved in the control of red light-induced stomatal opening (PubMed:26192339). Is epistatic to SRK2E/OST1 function during stomatal responses to red light and altered CO(2) (PubMed:26192339). Phosphorylates SRK2E/OST1 and GHR1 to prevents SRK2E/OST1- and GHR1-induced activation of SLAC1, thus preventing stomatal closure (PubMed:25599916, PubMed:27694184, PubMed:30361234). Mediates the phosphorylation of CBC1 and CBC2 (PubMed:29101334).</text>
</comment>
<comment type="catalytic activity">
    <reaction evidence="1 2 5 6 7">
        <text>L-seryl-[protein] + ATP = O-phospho-L-seryl-[protein] + ADP + H(+)</text>
        <dbReference type="Rhea" id="RHEA:17989"/>
        <dbReference type="Rhea" id="RHEA-COMP:9863"/>
        <dbReference type="Rhea" id="RHEA-COMP:11604"/>
        <dbReference type="ChEBI" id="CHEBI:15378"/>
        <dbReference type="ChEBI" id="CHEBI:29999"/>
        <dbReference type="ChEBI" id="CHEBI:30616"/>
        <dbReference type="ChEBI" id="CHEBI:83421"/>
        <dbReference type="ChEBI" id="CHEBI:456216"/>
        <dbReference type="EC" id="2.7.11.1"/>
    </reaction>
</comment>
<comment type="catalytic activity">
    <reaction evidence="1 2 5 6 7">
        <text>L-threonyl-[protein] + ATP = O-phospho-L-threonyl-[protein] + ADP + H(+)</text>
        <dbReference type="Rhea" id="RHEA:46608"/>
        <dbReference type="Rhea" id="RHEA-COMP:11060"/>
        <dbReference type="Rhea" id="RHEA-COMP:11605"/>
        <dbReference type="ChEBI" id="CHEBI:15378"/>
        <dbReference type="ChEBI" id="CHEBI:30013"/>
        <dbReference type="ChEBI" id="CHEBI:30616"/>
        <dbReference type="ChEBI" id="CHEBI:61977"/>
        <dbReference type="ChEBI" id="CHEBI:456216"/>
        <dbReference type="EC" id="2.7.11.1"/>
    </reaction>
</comment>
<comment type="catalytic activity">
    <reaction evidence="13">
        <text>L-tyrosyl-[protein] + ATP = O-phospho-L-tyrosyl-[protein] + ADP + H(+)</text>
        <dbReference type="Rhea" id="RHEA:10596"/>
        <dbReference type="Rhea" id="RHEA-COMP:10136"/>
        <dbReference type="Rhea" id="RHEA-COMP:20101"/>
        <dbReference type="ChEBI" id="CHEBI:15378"/>
        <dbReference type="ChEBI" id="CHEBI:30616"/>
        <dbReference type="ChEBI" id="CHEBI:46858"/>
        <dbReference type="ChEBI" id="CHEBI:61978"/>
        <dbReference type="ChEBI" id="CHEBI:456216"/>
        <dbReference type="EC" id="2.7.10.1"/>
    </reaction>
</comment>
<comment type="activity regulation">
    <text evidence="5 6">Inhibited by MPK4 and MPK12.</text>
</comment>
<comment type="subunit">
    <text evidence="3 5 6 7">Interacts with DTX56 (PubMed:25599916). Binds to MPK4 and MPK12 (PubMed:27694184, PubMed:27923039). Associates to CBC1 and CBC2 (PubMed:29101334).</text>
</comment>
<comment type="interaction">
    <interactant intactId="EBI-11174828">
        <id>Q2MHE4</id>
    </interactant>
    <interactant intactId="EBI-782514">
        <id>Q940H6</id>
        <label>SRK2E</label>
    </interactant>
    <organismsDiffer>false</organismsDiffer>
    <experiments>2</experiments>
</comment>
<comment type="subcellular location">
    <subcellularLocation>
        <location evidence="3">Cell membrane</location>
    </subcellularLocation>
</comment>
<comment type="tissue specificity">
    <text evidence="2">Mainly localizes in guard cells. Expressed at low level in leaves, stems, roots and flowers.</text>
</comment>
<comment type="PTM">
    <text evidence="2 5 6">Autophosphorylated.</text>
</comment>
<comment type="disruption phenotype">
    <text evidence="7">Suppressed low CO(2)-induced stomatal opening and impaired CO(2)-triggered stomatal closure.</text>
</comment>
<comment type="miscellaneous">
    <text evidence="12">'Suu' means 'mouth' in both Estonian and Finnish.</text>
</comment>
<comment type="similarity">
    <text evidence="1">Belongs to the protein kinase superfamily. Ser/Thr protein kinase family.</text>
</comment>
<comment type="sequence caution" evidence="11">
    <conflict type="erroneous gene model prediction">
        <sequence resource="EMBL-CDS" id="AAF70839"/>
    </conflict>
</comment>